<sequence>MTKLSHIRNFSIVAHIDHGKSTLADRLIQACGAIEAREMKEQMLDSMDIERERGITIKAQTVRLDYKAKDGKTYQLNLMDTPGHVDFAYEVSRSLAACEGSLLVVDASQGVEAQTLANVYHALDAGHEVVPVLNKIDLPAAEPERVKQQIEDVIGLDTSDAVMISAKTGIGIGDVLEALVNRLPCPEGDADAPLQALLVDSWYDPYLGVIILVRIKNGVLKKGQKIRMMATQAAYQVDSCGYFTPKLVQTTELRPGEMGFFTAAIKAVADTKVGDTVTDDKKPADTPLPGFKPSVPVVWCGLFPIDAADYEDLRDSLAKLRLNDASFQYEPETSAALGFGFRCGFLGLLHLEIIQERLEREFNLDLITTAPSVVYRVHKTNGEMEELHNPADMPDPARIDHMEEPWIKATIMVPDEYLGPVLTLCTERRGQQIDLTYAGSRAMAVYKLPLNEVVFDFYDRLKSISRGYASFDYEVDSYAQSDLVKVSILVNAEPVDALSFVVHRANAESRGRGICTRLKELIPRQMFQIAIQAAIGGRIVARESISALRKDVTAKCYGGDATRKRKLLEKQKEGKKRMRQFGKVEIPQSAFLAALKMGDS</sequence>
<gene>
    <name evidence="1" type="primary">lepA</name>
    <name type="ordered locus">amb3862</name>
</gene>
<evidence type="ECO:0000255" key="1">
    <source>
        <dbReference type="HAMAP-Rule" id="MF_00071"/>
    </source>
</evidence>
<protein>
    <recommendedName>
        <fullName evidence="1">Elongation factor 4</fullName>
        <shortName evidence="1">EF-4</shortName>
        <ecNumber evidence="1">3.6.5.n1</ecNumber>
    </recommendedName>
    <alternativeName>
        <fullName evidence="1">Ribosomal back-translocase LepA</fullName>
    </alternativeName>
</protein>
<reference key="1">
    <citation type="journal article" date="2005" name="DNA Res.">
        <title>Complete genome sequence of the facultative anaerobic magnetotactic bacterium Magnetospirillum sp. strain AMB-1.</title>
        <authorList>
            <person name="Matsunaga T."/>
            <person name="Okamura Y."/>
            <person name="Fukuda Y."/>
            <person name="Wahyudi A.T."/>
            <person name="Murase Y."/>
            <person name="Takeyama H."/>
        </authorList>
    </citation>
    <scope>NUCLEOTIDE SEQUENCE [LARGE SCALE GENOMIC DNA]</scope>
    <source>
        <strain>ATCC 700264 / AMB-1</strain>
    </source>
</reference>
<keyword id="KW-0997">Cell inner membrane</keyword>
<keyword id="KW-1003">Cell membrane</keyword>
<keyword id="KW-0342">GTP-binding</keyword>
<keyword id="KW-0378">Hydrolase</keyword>
<keyword id="KW-0472">Membrane</keyword>
<keyword id="KW-0547">Nucleotide-binding</keyword>
<keyword id="KW-0648">Protein biosynthesis</keyword>
<accession>Q2W0F9</accession>
<dbReference type="EC" id="3.6.5.n1" evidence="1"/>
<dbReference type="EMBL" id="AP007255">
    <property type="protein sequence ID" value="BAE52666.1"/>
    <property type="molecule type" value="Genomic_DNA"/>
</dbReference>
<dbReference type="RefSeq" id="WP_011386216.1">
    <property type="nucleotide sequence ID" value="NC_007626.1"/>
</dbReference>
<dbReference type="SMR" id="Q2W0F9"/>
<dbReference type="STRING" id="342108.amb3862"/>
<dbReference type="KEGG" id="mag:amb3862"/>
<dbReference type="HOGENOM" id="CLU_009995_3_3_5"/>
<dbReference type="OrthoDB" id="9802948at2"/>
<dbReference type="Proteomes" id="UP000007058">
    <property type="component" value="Chromosome"/>
</dbReference>
<dbReference type="GO" id="GO:0005886">
    <property type="term" value="C:plasma membrane"/>
    <property type="evidence" value="ECO:0007669"/>
    <property type="project" value="UniProtKB-SubCell"/>
</dbReference>
<dbReference type="GO" id="GO:0005525">
    <property type="term" value="F:GTP binding"/>
    <property type="evidence" value="ECO:0007669"/>
    <property type="project" value="UniProtKB-UniRule"/>
</dbReference>
<dbReference type="GO" id="GO:0003924">
    <property type="term" value="F:GTPase activity"/>
    <property type="evidence" value="ECO:0007669"/>
    <property type="project" value="UniProtKB-UniRule"/>
</dbReference>
<dbReference type="GO" id="GO:0097216">
    <property type="term" value="F:guanosine tetraphosphate binding"/>
    <property type="evidence" value="ECO:0007669"/>
    <property type="project" value="UniProtKB-ARBA"/>
</dbReference>
<dbReference type="GO" id="GO:0043022">
    <property type="term" value="F:ribosome binding"/>
    <property type="evidence" value="ECO:0007669"/>
    <property type="project" value="UniProtKB-UniRule"/>
</dbReference>
<dbReference type="GO" id="GO:0003746">
    <property type="term" value="F:translation elongation factor activity"/>
    <property type="evidence" value="ECO:0007669"/>
    <property type="project" value="UniProtKB-UniRule"/>
</dbReference>
<dbReference type="GO" id="GO:0045727">
    <property type="term" value="P:positive regulation of translation"/>
    <property type="evidence" value="ECO:0007669"/>
    <property type="project" value="UniProtKB-UniRule"/>
</dbReference>
<dbReference type="CDD" id="cd03699">
    <property type="entry name" value="EF4_II"/>
    <property type="match status" value="1"/>
</dbReference>
<dbReference type="CDD" id="cd16260">
    <property type="entry name" value="EF4_III"/>
    <property type="match status" value="1"/>
</dbReference>
<dbReference type="CDD" id="cd01890">
    <property type="entry name" value="LepA"/>
    <property type="match status" value="1"/>
</dbReference>
<dbReference type="CDD" id="cd03709">
    <property type="entry name" value="lepA_C"/>
    <property type="match status" value="1"/>
</dbReference>
<dbReference type="FunFam" id="3.40.50.300:FF:000078">
    <property type="entry name" value="Elongation factor 4"/>
    <property type="match status" value="1"/>
</dbReference>
<dbReference type="FunFam" id="2.40.30.10:FF:000015">
    <property type="entry name" value="Translation factor GUF1, mitochondrial"/>
    <property type="match status" value="1"/>
</dbReference>
<dbReference type="FunFam" id="3.30.70.240:FF:000007">
    <property type="entry name" value="Translation factor GUF1, mitochondrial"/>
    <property type="match status" value="1"/>
</dbReference>
<dbReference type="FunFam" id="3.30.70.2570:FF:000001">
    <property type="entry name" value="Translation factor GUF1, mitochondrial"/>
    <property type="match status" value="1"/>
</dbReference>
<dbReference type="FunFam" id="3.30.70.870:FF:000004">
    <property type="entry name" value="Translation factor GUF1, mitochondrial"/>
    <property type="match status" value="1"/>
</dbReference>
<dbReference type="Gene3D" id="3.30.70.240">
    <property type="match status" value="1"/>
</dbReference>
<dbReference type="Gene3D" id="3.30.70.2570">
    <property type="entry name" value="Elongation factor 4, C-terminal domain"/>
    <property type="match status" value="1"/>
</dbReference>
<dbReference type="Gene3D" id="3.30.70.870">
    <property type="entry name" value="Elongation Factor G (Translational Gtpase), domain 3"/>
    <property type="match status" value="1"/>
</dbReference>
<dbReference type="Gene3D" id="3.40.50.300">
    <property type="entry name" value="P-loop containing nucleotide triphosphate hydrolases"/>
    <property type="match status" value="1"/>
</dbReference>
<dbReference type="Gene3D" id="2.40.30.10">
    <property type="entry name" value="Translation factors"/>
    <property type="match status" value="1"/>
</dbReference>
<dbReference type="HAMAP" id="MF_00071">
    <property type="entry name" value="LepA"/>
    <property type="match status" value="1"/>
</dbReference>
<dbReference type="InterPro" id="IPR006297">
    <property type="entry name" value="EF-4"/>
</dbReference>
<dbReference type="InterPro" id="IPR035647">
    <property type="entry name" value="EFG_III/V"/>
</dbReference>
<dbReference type="InterPro" id="IPR000640">
    <property type="entry name" value="EFG_V-like"/>
</dbReference>
<dbReference type="InterPro" id="IPR004161">
    <property type="entry name" value="EFTu-like_2"/>
</dbReference>
<dbReference type="InterPro" id="IPR031157">
    <property type="entry name" value="G_TR_CS"/>
</dbReference>
<dbReference type="InterPro" id="IPR038363">
    <property type="entry name" value="LepA_C_sf"/>
</dbReference>
<dbReference type="InterPro" id="IPR013842">
    <property type="entry name" value="LepA_CTD"/>
</dbReference>
<dbReference type="InterPro" id="IPR035654">
    <property type="entry name" value="LepA_IV"/>
</dbReference>
<dbReference type="InterPro" id="IPR027417">
    <property type="entry name" value="P-loop_NTPase"/>
</dbReference>
<dbReference type="InterPro" id="IPR005225">
    <property type="entry name" value="Small_GTP-bd"/>
</dbReference>
<dbReference type="InterPro" id="IPR000795">
    <property type="entry name" value="T_Tr_GTP-bd_dom"/>
</dbReference>
<dbReference type="NCBIfam" id="TIGR01393">
    <property type="entry name" value="lepA"/>
    <property type="match status" value="1"/>
</dbReference>
<dbReference type="NCBIfam" id="TIGR00231">
    <property type="entry name" value="small_GTP"/>
    <property type="match status" value="1"/>
</dbReference>
<dbReference type="PANTHER" id="PTHR43512:SF4">
    <property type="entry name" value="TRANSLATION FACTOR GUF1 HOMOLOG, CHLOROPLASTIC"/>
    <property type="match status" value="1"/>
</dbReference>
<dbReference type="PANTHER" id="PTHR43512">
    <property type="entry name" value="TRANSLATION FACTOR GUF1-RELATED"/>
    <property type="match status" value="1"/>
</dbReference>
<dbReference type="Pfam" id="PF00679">
    <property type="entry name" value="EFG_C"/>
    <property type="match status" value="1"/>
</dbReference>
<dbReference type="Pfam" id="PF00009">
    <property type="entry name" value="GTP_EFTU"/>
    <property type="match status" value="1"/>
</dbReference>
<dbReference type="Pfam" id="PF03144">
    <property type="entry name" value="GTP_EFTU_D2"/>
    <property type="match status" value="1"/>
</dbReference>
<dbReference type="Pfam" id="PF06421">
    <property type="entry name" value="LepA_C"/>
    <property type="match status" value="1"/>
</dbReference>
<dbReference type="PRINTS" id="PR00315">
    <property type="entry name" value="ELONGATNFCT"/>
</dbReference>
<dbReference type="SMART" id="SM00838">
    <property type="entry name" value="EFG_C"/>
    <property type="match status" value="1"/>
</dbReference>
<dbReference type="SUPFAM" id="SSF54980">
    <property type="entry name" value="EF-G C-terminal domain-like"/>
    <property type="match status" value="2"/>
</dbReference>
<dbReference type="SUPFAM" id="SSF52540">
    <property type="entry name" value="P-loop containing nucleoside triphosphate hydrolases"/>
    <property type="match status" value="1"/>
</dbReference>
<dbReference type="PROSITE" id="PS00301">
    <property type="entry name" value="G_TR_1"/>
    <property type="match status" value="1"/>
</dbReference>
<dbReference type="PROSITE" id="PS51722">
    <property type="entry name" value="G_TR_2"/>
    <property type="match status" value="1"/>
</dbReference>
<feature type="chain" id="PRO_0000265671" description="Elongation factor 4">
    <location>
        <begin position="1"/>
        <end position="600"/>
    </location>
</feature>
<feature type="domain" description="tr-type G">
    <location>
        <begin position="5"/>
        <end position="187"/>
    </location>
</feature>
<feature type="binding site" evidence="1">
    <location>
        <begin position="17"/>
        <end position="22"/>
    </location>
    <ligand>
        <name>GTP</name>
        <dbReference type="ChEBI" id="CHEBI:37565"/>
    </ligand>
</feature>
<feature type="binding site" evidence="1">
    <location>
        <begin position="134"/>
        <end position="137"/>
    </location>
    <ligand>
        <name>GTP</name>
        <dbReference type="ChEBI" id="CHEBI:37565"/>
    </ligand>
</feature>
<proteinExistence type="inferred from homology"/>
<organism>
    <name type="scientific">Paramagnetospirillum magneticum (strain ATCC 700264 / AMB-1)</name>
    <name type="common">Magnetospirillum magneticum</name>
    <dbReference type="NCBI Taxonomy" id="342108"/>
    <lineage>
        <taxon>Bacteria</taxon>
        <taxon>Pseudomonadati</taxon>
        <taxon>Pseudomonadota</taxon>
        <taxon>Alphaproteobacteria</taxon>
        <taxon>Rhodospirillales</taxon>
        <taxon>Magnetospirillaceae</taxon>
        <taxon>Paramagnetospirillum</taxon>
    </lineage>
</organism>
<name>LEPA_PARM1</name>
<comment type="function">
    <text evidence="1">Required for accurate and efficient protein synthesis under certain stress conditions. May act as a fidelity factor of the translation reaction, by catalyzing a one-codon backward translocation of tRNAs on improperly translocated ribosomes. Back-translocation proceeds from a post-translocation (POST) complex to a pre-translocation (PRE) complex, thus giving elongation factor G a second chance to translocate the tRNAs correctly. Binds to ribosomes in a GTP-dependent manner.</text>
</comment>
<comment type="catalytic activity">
    <reaction evidence="1">
        <text>GTP + H2O = GDP + phosphate + H(+)</text>
        <dbReference type="Rhea" id="RHEA:19669"/>
        <dbReference type="ChEBI" id="CHEBI:15377"/>
        <dbReference type="ChEBI" id="CHEBI:15378"/>
        <dbReference type="ChEBI" id="CHEBI:37565"/>
        <dbReference type="ChEBI" id="CHEBI:43474"/>
        <dbReference type="ChEBI" id="CHEBI:58189"/>
        <dbReference type="EC" id="3.6.5.n1"/>
    </reaction>
</comment>
<comment type="subcellular location">
    <subcellularLocation>
        <location evidence="1">Cell inner membrane</location>
        <topology evidence="1">Peripheral membrane protein</topology>
        <orientation evidence="1">Cytoplasmic side</orientation>
    </subcellularLocation>
</comment>
<comment type="similarity">
    <text evidence="1">Belongs to the TRAFAC class translation factor GTPase superfamily. Classic translation factor GTPase family. LepA subfamily.</text>
</comment>